<sequence>MLVPKRVKYRREFRGNMRGRAKGGTEVAFGEYGLQAVEASWITNRQIEAARIAMTRYMKRGGKVWIKIFPHKSYTSKPIGVRMGKGKGAPEGWVSPVKRGKIMFEIAGVPEDVAREALRLAAHKLPVKTKIVKREEIGGEANES</sequence>
<comment type="function">
    <text evidence="1">Binds 23S rRNA and is also seen to make contacts with the A and possibly P site tRNAs.</text>
</comment>
<comment type="subunit">
    <text evidence="1">Part of the 50S ribosomal subunit.</text>
</comment>
<comment type="similarity">
    <text evidence="1">Belongs to the universal ribosomal protein uL16 family.</text>
</comment>
<feature type="chain" id="PRO_1000166364" description="Large ribosomal subunit protein uL16">
    <location>
        <begin position="1"/>
        <end position="144"/>
    </location>
</feature>
<keyword id="KW-0687">Ribonucleoprotein</keyword>
<keyword id="KW-0689">Ribosomal protein</keyword>
<keyword id="KW-0694">RNA-binding</keyword>
<keyword id="KW-0699">rRNA-binding</keyword>
<keyword id="KW-0820">tRNA-binding</keyword>
<reference key="1">
    <citation type="journal article" date="2011" name="J. Bacteriol.">
        <title>Genome sequence of lineage III Listeria monocytogenes strain HCC23.</title>
        <authorList>
            <person name="Steele C.L."/>
            <person name="Donaldson J.R."/>
            <person name="Paul D."/>
            <person name="Banes M.M."/>
            <person name="Arick T."/>
            <person name="Bridges S.M."/>
            <person name="Lawrence M.L."/>
        </authorList>
    </citation>
    <scope>NUCLEOTIDE SEQUENCE [LARGE SCALE GENOMIC DNA]</scope>
    <source>
        <strain>HCC23</strain>
    </source>
</reference>
<protein>
    <recommendedName>
        <fullName evidence="1">Large ribosomal subunit protein uL16</fullName>
    </recommendedName>
    <alternativeName>
        <fullName evidence="2">50S ribosomal protein L16</fullName>
    </alternativeName>
</protein>
<name>RL16_LISMH</name>
<accession>B8DB15</accession>
<proteinExistence type="inferred from homology"/>
<dbReference type="EMBL" id="CP001175">
    <property type="protein sequence ID" value="ACK41240.1"/>
    <property type="molecule type" value="Genomic_DNA"/>
</dbReference>
<dbReference type="RefSeq" id="WP_003720943.1">
    <property type="nucleotide sequence ID" value="NC_011660.1"/>
</dbReference>
<dbReference type="SMR" id="B8DB15"/>
<dbReference type="GeneID" id="93240506"/>
<dbReference type="KEGG" id="lmh:LMHCC_2909"/>
<dbReference type="HOGENOM" id="CLU_078858_2_1_9"/>
<dbReference type="GO" id="GO:0022625">
    <property type="term" value="C:cytosolic large ribosomal subunit"/>
    <property type="evidence" value="ECO:0007669"/>
    <property type="project" value="TreeGrafter"/>
</dbReference>
<dbReference type="GO" id="GO:0019843">
    <property type="term" value="F:rRNA binding"/>
    <property type="evidence" value="ECO:0007669"/>
    <property type="project" value="UniProtKB-UniRule"/>
</dbReference>
<dbReference type="GO" id="GO:0003735">
    <property type="term" value="F:structural constituent of ribosome"/>
    <property type="evidence" value="ECO:0007669"/>
    <property type="project" value="InterPro"/>
</dbReference>
<dbReference type="GO" id="GO:0000049">
    <property type="term" value="F:tRNA binding"/>
    <property type="evidence" value="ECO:0007669"/>
    <property type="project" value="UniProtKB-KW"/>
</dbReference>
<dbReference type="GO" id="GO:0006412">
    <property type="term" value="P:translation"/>
    <property type="evidence" value="ECO:0007669"/>
    <property type="project" value="UniProtKB-UniRule"/>
</dbReference>
<dbReference type="CDD" id="cd01433">
    <property type="entry name" value="Ribosomal_L16_L10e"/>
    <property type="match status" value="1"/>
</dbReference>
<dbReference type="FunFam" id="3.90.1170.10:FF:000001">
    <property type="entry name" value="50S ribosomal protein L16"/>
    <property type="match status" value="1"/>
</dbReference>
<dbReference type="Gene3D" id="3.90.1170.10">
    <property type="entry name" value="Ribosomal protein L10e/L16"/>
    <property type="match status" value="1"/>
</dbReference>
<dbReference type="HAMAP" id="MF_01342">
    <property type="entry name" value="Ribosomal_uL16"/>
    <property type="match status" value="1"/>
</dbReference>
<dbReference type="InterPro" id="IPR047873">
    <property type="entry name" value="Ribosomal_uL16"/>
</dbReference>
<dbReference type="InterPro" id="IPR000114">
    <property type="entry name" value="Ribosomal_uL16_bact-type"/>
</dbReference>
<dbReference type="InterPro" id="IPR020798">
    <property type="entry name" value="Ribosomal_uL16_CS"/>
</dbReference>
<dbReference type="InterPro" id="IPR016180">
    <property type="entry name" value="Ribosomal_uL16_dom"/>
</dbReference>
<dbReference type="InterPro" id="IPR036920">
    <property type="entry name" value="Ribosomal_uL16_sf"/>
</dbReference>
<dbReference type="NCBIfam" id="TIGR01164">
    <property type="entry name" value="rplP_bact"/>
    <property type="match status" value="1"/>
</dbReference>
<dbReference type="PANTHER" id="PTHR12220">
    <property type="entry name" value="50S/60S RIBOSOMAL PROTEIN L16"/>
    <property type="match status" value="1"/>
</dbReference>
<dbReference type="PANTHER" id="PTHR12220:SF13">
    <property type="entry name" value="LARGE RIBOSOMAL SUBUNIT PROTEIN UL16M"/>
    <property type="match status" value="1"/>
</dbReference>
<dbReference type="Pfam" id="PF00252">
    <property type="entry name" value="Ribosomal_L16"/>
    <property type="match status" value="1"/>
</dbReference>
<dbReference type="PRINTS" id="PR00060">
    <property type="entry name" value="RIBOSOMALL16"/>
</dbReference>
<dbReference type="SUPFAM" id="SSF54686">
    <property type="entry name" value="Ribosomal protein L16p/L10e"/>
    <property type="match status" value="1"/>
</dbReference>
<dbReference type="PROSITE" id="PS00586">
    <property type="entry name" value="RIBOSOMAL_L16_1"/>
    <property type="match status" value="1"/>
</dbReference>
<dbReference type="PROSITE" id="PS00701">
    <property type="entry name" value="RIBOSOMAL_L16_2"/>
    <property type="match status" value="1"/>
</dbReference>
<evidence type="ECO:0000255" key="1">
    <source>
        <dbReference type="HAMAP-Rule" id="MF_01342"/>
    </source>
</evidence>
<evidence type="ECO:0000305" key="2"/>
<gene>
    <name evidence="1" type="primary">rplP</name>
    <name type="ordered locus">LMHCC_2909</name>
</gene>
<organism>
    <name type="scientific">Listeria monocytogenes serotype 4a (strain HCC23)</name>
    <dbReference type="NCBI Taxonomy" id="552536"/>
    <lineage>
        <taxon>Bacteria</taxon>
        <taxon>Bacillati</taxon>
        <taxon>Bacillota</taxon>
        <taxon>Bacilli</taxon>
        <taxon>Bacillales</taxon>
        <taxon>Listeriaceae</taxon>
        <taxon>Listeria</taxon>
    </lineage>
</organism>